<comment type="function">
    <text evidence="4 5 6">Acts as an important epigenetic regulator through multiple silencing mechanisms (PubMed:23555312, PubMed:25211139). Involved in association with RRP6L1 in the silencing of the solo LTR locus. Controls levels of non-coding RNAs (ncRNAs) from the solo LTR locus. Seems to function independently of the RNA-mediated gene silencing (RdDM) pathway (PubMed:23555312). Functions redundantly with RRP6L1 in the regulation of FLC locus. Participates in the maintenance of trimethylated 'Lys-27' (H3K27me3) at FLC locus via the regulation of antisense long non-coding RNAs (lncRNAs) and the regulation of diverse antisense RNAs derived from the FLC locus. Seems not involved in the exosomal RNA degradation (PubMed:25211139). May be involved in poly(A)-mediated RNA degradation (PubMed:18285452).</text>
</comment>
<comment type="subcellular location">
    <subcellularLocation>
        <location evidence="4">Nucleus</location>
    </subcellularLocation>
    <subcellularLocation>
        <location evidence="4">Nucleus</location>
        <location evidence="4">Nucleolus</location>
    </subcellularLocation>
    <subcellularLocation>
        <location evidence="4">Cytoplasm</location>
    </subcellularLocation>
    <text evidence="4">Localizes predominantly in the nucleus.</text>
</comment>
<comment type="disruption phenotype">
    <text evidence="4 6">No visible phenotype under normal growth conditions (PubMed:18285452, PubMed:25211139). The double mutants rrp6l1 and rrp6l2 have a late flowering phenotype (PubMed:25211139).</text>
</comment>
<comment type="sequence caution" evidence="8">
    <conflict type="erroneous gene model prediction">
        <sequence resource="EMBL-CDS" id="BAB09932"/>
    </conflict>
</comment>
<reference key="1">
    <citation type="journal article" date="2008" name="Mol. Cell. Biol.">
        <title>Degradation of a polyadenylated rRNA maturation by-product involves one of the three RRP6-like proteins in Arabidopsis thaliana.</title>
        <authorList>
            <person name="Lange H."/>
            <person name="Holec S."/>
            <person name="Cognat V."/>
            <person name="Pieuchot L."/>
            <person name="Le Ret M."/>
            <person name="Canaday J."/>
            <person name="Gagliardi D."/>
        </authorList>
    </citation>
    <scope>NUCLEOTIDE SEQUENCE [MRNA]</scope>
    <scope>FUNCTION</scope>
    <scope>SUBCELLULAR LOCATION</scope>
    <scope>DISRUPTION PHENOTYPE</scope>
    <source>
        <strain>cv. Columbia</strain>
    </source>
</reference>
<reference key="2">
    <citation type="journal article" date="1997" name="DNA Res.">
        <title>Structural analysis of Arabidopsis thaliana chromosome 5. I. Sequence features of the 1.6 Mb regions covered by twenty physically assigned P1 clones.</title>
        <authorList>
            <person name="Sato S."/>
            <person name="Kotani H."/>
            <person name="Nakamura Y."/>
            <person name="Kaneko T."/>
            <person name="Asamizu E."/>
            <person name="Fukami M."/>
            <person name="Miyajima N."/>
            <person name="Tabata S."/>
        </authorList>
    </citation>
    <scope>NUCLEOTIDE SEQUENCE [LARGE SCALE GENOMIC DNA]</scope>
    <source>
        <strain>cv. Columbia</strain>
    </source>
</reference>
<reference key="3">
    <citation type="submission" date="1999-04" db="EMBL/GenBank/DDBJ databases">
        <title>Structural analysis of Arabidopsis thaliana chromosome 5. XI.</title>
        <authorList>
            <person name="Kaneko T."/>
            <person name="Katoh T."/>
            <person name="Asamizu E."/>
            <person name="Sato S."/>
            <person name="Nakamura Y."/>
            <person name="Kotani H."/>
            <person name="Tabata S."/>
        </authorList>
    </citation>
    <scope>NUCLEOTIDE SEQUENCE [LARGE SCALE GENOMIC DNA]</scope>
    <source>
        <strain>cv. Columbia</strain>
    </source>
</reference>
<reference key="4">
    <citation type="journal article" date="2017" name="Plant J.">
        <title>Araport11: a complete reannotation of the Arabidopsis thaliana reference genome.</title>
        <authorList>
            <person name="Cheng C.Y."/>
            <person name="Krishnakumar V."/>
            <person name="Chan A.P."/>
            <person name="Thibaud-Nissen F."/>
            <person name="Schobel S."/>
            <person name="Town C.D."/>
        </authorList>
    </citation>
    <scope>GENOME REANNOTATION</scope>
    <source>
        <strain>cv. Columbia</strain>
    </source>
</reference>
<reference key="5">
    <citation type="journal article" date="2013" name="PLoS Genet.">
        <title>The role of the Arabidopsis Exosome in siRNA-independent silencing of heterochromatic loci.</title>
        <authorList>
            <person name="Shin J.H."/>
            <person name="Wang H.L."/>
            <person name="Lee J."/>
            <person name="Dinwiddie B.L."/>
            <person name="Belostotsky D.A."/>
            <person name="Chekanova J.A."/>
        </authorList>
    </citation>
    <scope>FUNCTION</scope>
</reference>
<reference key="6">
    <citation type="journal article" date="2014" name="PLoS Genet.">
        <title>Arabidopsis RRP6L1 and RRP6L2 function in FLOWERING LOCUS C silencing via regulation of antisense RNA synthesis.</title>
        <authorList>
            <person name="Shin J.H."/>
            <person name="Chekanova J.A."/>
        </authorList>
    </citation>
    <scope>FUNCTION</scope>
    <scope>DISRUPTION PHENOTYPE</scope>
</reference>
<dbReference type="EMBL" id="EU240663">
    <property type="protein sequence ID" value="ABX52080.1"/>
    <property type="molecule type" value="mRNA"/>
</dbReference>
<dbReference type="EMBL" id="AB005236">
    <property type="protein sequence ID" value="BAB09932.1"/>
    <property type="status" value="ALT_SEQ"/>
    <property type="molecule type" value="Genomic_DNA"/>
</dbReference>
<dbReference type="EMBL" id="AB025602">
    <property type="protein sequence ID" value="BAB09932.1"/>
    <property type="status" value="JOINED"/>
    <property type="molecule type" value="Genomic_DNA"/>
</dbReference>
<dbReference type="EMBL" id="CP002688">
    <property type="protein sequence ID" value="AED94025.1"/>
    <property type="molecule type" value="Genomic_DNA"/>
</dbReference>
<dbReference type="RefSeq" id="NP_198440.2">
    <property type="nucleotide sequence ID" value="NM_122982.4"/>
</dbReference>
<dbReference type="SMR" id="A9LLI7"/>
<dbReference type="FunCoup" id="A9LLI7">
    <property type="interactions" value="4719"/>
</dbReference>
<dbReference type="STRING" id="3702.A9LLI7"/>
<dbReference type="iPTMnet" id="A9LLI7"/>
<dbReference type="PaxDb" id="3702-AT5G35910.1"/>
<dbReference type="ProteomicsDB" id="227971"/>
<dbReference type="EnsemblPlants" id="AT5G35910.1">
    <property type="protein sequence ID" value="AT5G35910.1"/>
    <property type="gene ID" value="AT5G35910"/>
</dbReference>
<dbReference type="GeneID" id="833577"/>
<dbReference type="Gramene" id="AT5G35910.1">
    <property type="protein sequence ID" value="AT5G35910.1"/>
    <property type="gene ID" value="AT5G35910"/>
</dbReference>
<dbReference type="KEGG" id="ath:AT5G35910"/>
<dbReference type="Araport" id="AT5G35910"/>
<dbReference type="TAIR" id="AT5G35910">
    <property type="gene designation" value="RRP6L2"/>
</dbReference>
<dbReference type="eggNOG" id="KOG2206">
    <property type="taxonomic scope" value="Eukaryota"/>
</dbReference>
<dbReference type="HOGENOM" id="CLU_010129_4_1_1"/>
<dbReference type="InParanoid" id="A9LLI7"/>
<dbReference type="OMA" id="DWLVNIN"/>
<dbReference type="PhylomeDB" id="A9LLI7"/>
<dbReference type="CD-CODE" id="4299E36E">
    <property type="entry name" value="Nucleolus"/>
</dbReference>
<dbReference type="PRO" id="PR:A9LLI7"/>
<dbReference type="Proteomes" id="UP000006548">
    <property type="component" value="Chromosome 5"/>
</dbReference>
<dbReference type="ExpressionAtlas" id="A9LLI7">
    <property type="expression patterns" value="baseline and differential"/>
</dbReference>
<dbReference type="GO" id="GO:0005737">
    <property type="term" value="C:cytoplasm"/>
    <property type="evidence" value="ECO:0000314"/>
    <property type="project" value="UniProtKB"/>
</dbReference>
<dbReference type="GO" id="GO:0005730">
    <property type="term" value="C:nucleolus"/>
    <property type="evidence" value="ECO:0000314"/>
    <property type="project" value="UniProtKB"/>
</dbReference>
<dbReference type="GO" id="GO:0005634">
    <property type="term" value="C:nucleus"/>
    <property type="evidence" value="ECO:0000314"/>
    <property type="project" value="UniProtKB"/>
</dbReference>
<dbReference type="GO" id="GO:0000175">
    <property type="term" value="F:3'-5'-RNA exonuclease activity"/>
    <property type="evidence" value="ECO:0007669"/>
    <property type="project" value="InterPro"/>
</dbReference>
<dbReference type="GO" id="GO:0003676">
    <property type="term" value="F:nucleic acid binding"/>
    <property type="evidence" value="ECO:0007669"/>
    <property type="project" value="InterPro"/>
</dbReference>
<dbReference type="GO" id="GO:0000166">
    <property type="term" value="F:nucleotide binding"/>
    <property type="evidence" value="ECO:0007669"/>
    <property type="project" value="InterPro"/>
</dbReference>
<dbReference type="GO" id="GO:0000467">
    <property type="term" value="P:exonucleolytic trimming to generate mature 3'-end of 5.8S rRNA from tricistronic rRNA transcript (SSU-rRNA, 5.8S rRNA, LSU-rRNA)"/>
    <property type="evidence" value="ECO:0007669"/>
    <property type="project" value="InterPro"/>
</dbReference>
<dbReference type="GO" id="GO:0080188">
    <property type="term" value="P:gene silencing by siRNA-directed DNA methylation"/>
    <property type="evidence" value="ECO:0000315"/>
    <property type="project" value="UniProtKB"/>
</dbReference>
<dbReference type="GO" id="GO:0043633">
    <property type="term" value="P:polyadenylation-dependent RNA catabolic process"/>
    <property type="evidence" value="ECO:0000315"/>
    <property type="project" value="UniProtKB"/>
</dbReference>
<dbReference type="GO" id="GO:0006364">
    <property type="term" value="P:rRNA processing"/>
    <property type="evidence" value="ECO:0000315"/>
    <property type="project" value="TAIR"/>
</dbReference>
<dbReference type="CDD" id="cd06147">
    <property type="entry name" value="Rrp6p_like_exo"/>
    <property type="match status" value="1"/>
</dbReference>
<dbReference type="FunFam" id="3.30.420.10:FF:000065">
    <property type="entry name" value="Protein RRP6-like 2 isoform A"/>
    <property type="match status" value="1"/>
</dbReference>
<dbReference type="FunFam" id="1.10.150.80:FF:000001">
    <property type="entry name" value="Putative exosome component 10"/>
    <property type="match status" value="1"/>
</dbReference>
<dbReference type="Gene3D" id="1.10.150.80">
    <property type="entry name" value="HRDC domain"/>
    <property type="match status" value="1"/>
</dbReference>
<dbReference type="Gene3D" id="3.30.420.10">
    <property type="entry name" value="Ribonuclease H-like superfamily/Ribonuclease H"/>
    <property type="match status" value="1"/>
</dbReference>
<dbReference type="InterPro" id="IPR002562">
    <property type="entry name" value="3'-5'_exonuclease_dom"/>
</dbReference>
<dbReference type="InterPro" id="IPR010997">
    <property type="entry name" value="HRDC-like_sf"/>
</dbReference>
<dbReference type="InterPro" id="IPR002121">
    <property type="entry name" value="HRDC_dom"/>
</dbReference>
<dbReference type="InterPro" id="IPR044876">
    <property type="entry name" value="HRDC_dom_sf"/>
</dbReference>
<dbReference type="InterPro" id="IPR012337">
    <property type="entry name" value="RNaseH-like_sf"/>
</dbReference>
<dbReference type="InterPro" id="IPR036397">
    <property type="entry name" value="RNaseH_sf"/>
</dbReference>
<dbReference type="InterPro" id="IPR045092">
    <property type="entry name" value="Rrp6-like"/>
</dbReference>
<dbReference type="InterPro" id="IPR049559">
    <property type="entry name" value="Rrp6p-like_exo"/>
</dbReference>
<dbReference type="PANTHER" id="PTHR12124:SF47">
    <property type="entry name" value="EXOSOME COMPONENT 10"/>
    <property type="match status" value="1"/>
</dbReference>
<dbReference type="PANTHER" id="PTHR12124">
    <property type="entry name" value="POLYMYOSITIS/SCLERODERMA AUTOANTIGEN-RELATED"/>
    <property type="match status" value="1"/>
</dbReference>
<dbReference type="Pfam" id="PF01612">
    <property type="entry name" value="DNA_pol_A_exo1"/>
    <property type="match status" value="1"/>
</dbReference>
<dbReference type="Pfam" id="PF00570">
    <property type="entry name" value="HRDC"/>
    <property type="match status" value="1"/>
</dbReference>
<dbReference type="SMART" id="SM00474">
    <property type="entry name" value="35EXOc"/>
    <property type="match status" value="1"/>
</dbReference>
<dbReference type="SMART" id="SM00341">
    <property type="entry name" value="HRDC"/>
    <property type="match status" value="1"/>
</dbReference>
<dbReference type="SUPFAM" id="SSF47819">
    <property type="entry name" value="HRDC-like"/>
    <property type="match status" value="1"/>
</dbReference>
<dbReference type="SUPFAM" id="SSF53098">
    <property type="entry name" value="Ribonuclease H-like"/>
    <property type="match status" value="1"/>
</dbReference>
<dbReference type="PROSITE" id="PS50967">
    <property type="entry name" value="HRDC"/>
    <property type="match status" value="1"/>
</dbReference>
<evidence type="ECO:0000255" key="1"/>
<evidence type="ECO:0000255" key="2">
    <source>
        <dbReference type="PROSITE-ProRule" id="PRU00328"/>
    </source>
</evidence>
<evidence type="ECO:0000256" key="3">
    <source>
        <dbReference type="SAM" id="MobiDB-lite"/>
    </source>
</evidence>
<evidence type="ECO:0000269" key="4">
    <source>
    </source>
</evidence>
<evidence type="ECO:0000269" key="5">
    <source>
    </source>
</evidence>
<evidence type="ECO:0000269" key="6">
    <source>
    </source>
</evidence>
<evidence type="ECO:0000303" key="7">
    <source>
    </source>
</evidence>
<evidence type="ECO:0000305" key="8"/>
<evidence type="ECO:0000312" key="9">
    <source>
        <dbReference type="Araport" id="AT5G35910"/>
    </source>
</evidence>
<evidence type="ECO:0000312" key="10">
    <source>
        <dbReference type="EMBL" id="BAB09932.1"/>
    </source>
</evidence>
<protein>
    <recommendedName>
        <fullName evidence="7">Protein RRP6-like 2</fullName>
        <shortName evidence="7">AtRRP6L2</shortName>
    </recommendedName>
</protein>
<name>RP6L2_ARATH</name>
<organism>
    <name type="scientific">Arabidopsis thaliana</name>
    <name type="common">Mouse-ear cress</name>
    <dbReference type="NCBI Taxonomy" id="3702"/>
    <lineage>
        <taxon>Eukaryota</taxon>
        <taxon>Viridiplantae</taxon>
        <taxon>Streptophyta</taxon>
        <taxon>Embryophyta</taxon>
        <taxon>Tracheophyta</taxon>
        <taxon>Spermatophyta</taxon>
        <taxon>Magnoliopsida</taxon>
        <taxon>eudicotyledons</taxon>
        <taxon>Gunneridae</taxon>
        <taxon>Pentapetalae</taxon>
        <taxon>rosids</taxon>
        <taxon>malvids</taxon>
        <taxon>Brassicales</taxon>
        <taxon>Brassicaceae</taxon>
        <taxon>Camelineae</taxon>
        <taxon>Arabidopsis</taxon>
    </lineage>
</organism>
<proteinExistence type="evidence at transcript level"/>
<gene>
    <name evidence="7" type="primary">RRP6L2</name>
    <name evidence="9" type="ordered locus">At5g35910</name>
    <name evidence="10" type="ORF">MIK22.22</name>
</gene>
<feature type="chain" id="PRO_0000433631" description="Protein RRP6-like 2">
    <location>
        <begin position="1"/>
        <end position="870"/>
    </location>
</feature>
<feature type="domain" description="3'-5' exonuclease" evidence="1">
    <location>
        <begin position="263"/>
        <end position="428"/>
    </location>
</feature>
<feature type="domain" description="HRDC" evidence="2">
    <location>
        <begin position="479"/>
        <end position="559"/>
    </location>
</feature>
<feature type="region of interest" description="Disordered" evidence="3">
    <location>
        <begin position="583"/>
        <end position="605"/>
    </location>
</feature>
<feature type="region of interest" description="Disordered" evidence="3">
    <location>
        <begin position="649"/>
        <end position="668"/>
    </location>
</feature>
<feature type="region of interest" description="Disordered" evidence="3">
    <location>
        <begin position="688"/>
        <end position="775"/>
    </location>
</feature>
<feature type="region of interest" description="Disordered" evidence="3">
    <location>
        <begin position="821"/>
        <end position="870"/>
    </location>
</feature>
<feature type="compositionally biased region" description="Basic and acidic residues" evidence="3">
    <location>
        <begin position="720"/>
        <end position="729"/>
    </location>
</feature>
<feature type="compositionally biased region" description="Basic and acidic residues" evidence="3">
    <location>
        <begin position="821"/>
        <end position="834"/>
    </location>
</feature>
<feature type="compositionally biased region" description="Polar residues" evidence="3">
    <location>
        <begin position="840"/>
        <end position="849"/>
    </location>
</feature>
<keyword id="KW-0963">Cytoplasm</keyword>
<keyword id="KW-0269">Exonuclease</keyword>
<keyword id="KW-0378">Hydrolase</keyword>
<keyword id="KW-0540">Nuclease</keyword>
<keyword id="KW-0539">Nucleus</keyword>
<keyword id="KW-1185">Reference proteome</keyword>
<keyword id="KW-0943">RNA-mediated gene silencing</keyword>
<accession>A9LLI7</accession>
<accession>Q9FFL2</accession>
<sequence length="870" mass="97889">MSDGNMDVDESPVSWKVKSLEKLIDGSSFSSTLSRLSSSSRLIPTSRDFHFYYNFDEFKRPIDEITGTSQSTLATIGDSEQVWGKSMKFPGDVDDVYAEDWLCNVNDELIERFDVSVDEFQRIRKKEKEIGRSVVADDGDDGFQMVYGKKKKPVGNVVTGSAAVNGGGSVIDVKMAERDKNSSGKAKVPFHVPTIKKPQEEYNILVNNANLPFEHVWLERSEDDLRAMHPLEKFSVLDFVDKDVNEMEPVKPLPLEQTPFKFVQEVKDLKELVAKLRSVEEFAVDLEHNQYRSFQGLTCLMQISTRTEDYIVDTFKLRIHIGPYLREIFKDPKKKKVMHGADRDIIWLQRDFGIYVCNLFDTGQASRVLNLERNSLEFLLQHFCGVTANKEYQNADWRIRPLPEEMTRYAREDTHYLLYIYDLIKLELQRMAKDDAHTDSPLLEVYKRSYDVCTQLYEKELLTENSYLHVYGLQAAGFNAAQLAIVAGLCEWRDFIARAEDESTGYVLPNKVLLEIAKEMPDSVGKLRRMLKSKHPYIERNVDSVVSVIRQSMQHYAAFESAALSLKDVSPGNVMDKNIEPISEKKDLHTGDVASPSLKENSSQLESTRDLIMGAANTNEGRGLGSGLFGSAKVSAAVRISKKPSSGLGALLGNAASKKKSRTDEKVKEDVKLEQIRSSVNLSFHSFTEKVPDSKSTSETSPKVYGKPEEMSSTMPASVSKEDGVKELKDDSEEASEIVGTSGRVSESKVSSSEMGDIILLENGDEKKVDAEDEPMSLSELSTNFQKCFKSMNKSKKAQKQTEFLNIEPFDYEAARKEVKFGEGHKGRQGKREAAAGQKKGSTQEQSEFGQGKRRQAFPASGNRSMSFKN</sequence>